<feature type="chain" id="PRO_0000315586" description="Uncharacterized Nudix hydrolase NudL">
    <location>
        <begin position="1"/>
        <end position="192"/>
    </location>
</feature>
<feature type="domain" description="Nudix hydrolase" evidence="1">
    <location>
        <begin position="29"/>
        <end position="160"/>
    </location>
</feature>
<feature type="short sequence motif" description="Nudix box">
    <location>
        <begin position="67"/>
        <end position="89"/>
    </location>
</feature>
<feature type="binding site" evidence="1">
    <location>
        <position position="83"/>
    </location>
    <ligand>
        <name>Mg(2+)</name>
        <dbReference type="ChEBI" id="CHEBI:18420"/>
    </ligand>
</feature>
<feature type="binding site" evidence="1">
    <location>
        <position position="87"/>
    </location>
    <ligand>
        <name>Mg(2+)</name>
        <dbReference type="ChEBI" id="CHEBI:18420"/>
    </ligand>
</feature>
<proteinExistence type="inferred from homology"/>
<comment type="function">
    <text evidence="1">Probably mediates the hydrolysis of some nucleoside diphosphate derivatives.</text>
</comment>
<comment type="cofactor">
    <cofactor evidence="1">
        <name>Mn(2+)</name>
        <dbReference type="ChEBI" id="CHEBI:29035"/>
    </cofactor>
    <cofactor evidence="1">
        <name>Mg(2+)</name>
        <dbReference type="ChEBI" id="CHEBI:18420"/>
    </cofactor>
</comment>
<comment type="similarity">
    <text evidence="1">Belongs to the Nudix hydrolase family. PCD1 subfamily.</text>
</comment>
<name>NUDL_SHIF8</name>
<evidence type="ECO:0000255" key="1">
    <source>
        <dbReference type="HAMAP-Rule" id="MF_01592"/>
    </source>
</evidence>
<dbReference type="EC" id="3.6.1.-" evidence="1"/>
<dbReference type="EMBL" id="CP000266">
    <property type="protein sequence ID" value="ABF03609.1"/>
    <property type="molecule type" value="Genomic_DNA"/>
</dbReference>
<dbReference type="RefSeq" id="WP_000456708.1">
    <property type="nucleotide sequence ID" value="NC_008258.1"/>
</dbReference>
<dbReference type="SMR" id="Q0T506"/>
<dbReference type="KEGG" id="sfv:SFV_1416"/>
<dbReference type="HOGENOM" id="CLU_040940_5_2_6"/>
<dbReference type="Proteomes" id="UP000000659">
    <property type="component" value="Chromosome"/>
</dbReference>
<dbReference type="GO" id="GO:0010945">
    <property type="term" value="F:coenzyme A diphosphatase activity"/>
    <property type="evidence" value="ECO:0007669"/>
    <property type="project" value="InterPro"/>
</dbReference>
<dbReference type="GO" id="GO:0000287">
    <property type="term" value="F:magnesium ion binding"/>
    <property type="evidence" value="ECO:0007669"/>
    <property type="project" value="UniProtKB-UniRule"/>
</dbReference>
<dbReference type="GO" id="GO:0030145">
    <property type="term" value="F:manganese ion binding"/>
    <property type="evidence" value="ECO:0007669"/>
    <property type="project" value="UniProtKB-UniRule"/>
</dbReference>
<dbReference type="GO" id="GO:0009132">
    <property type="term" value="P:nucleoside diphosphate metabolic process"/>
    <property type="evidence" value="ECO:0007669"/>
    <property type="project" value="InterPro"/>
</dbReference>
<dbReference type="CDD" id="cd03426">
    <property type="entry name" value="NUDIX_CoAse_Nudt7"/>
    <property type="match status" value="1"/>
</dbReference>
<dbReference type="FunFam" id="3.90.79.10:FF:000013">
    <property type="entry name" value="Uncharacterized Nudix hydrolase NudL"/>
    <property type="match status" value="1"/>
</dbReference>
<dbReference type="Gene3D" id="3.90.79.10">
    <property type="entry name" value="Nucleoside Triphosphate Pyrophosphohydrolase"/>
    <property type="match status" value="1"/>
</dbReference>
<dbReference type="HAMAP" id="MF_01592">
    <property type="entry name" value="Nudix_NudL"/>
    <property type="match status" value="1"/>
</dbReference>
<dbReference type="InterPro" id="IPR045121">
    <property type="entry name" value="CoAse"/>
</dbReference>
<dbReference type="InterPro" id="IPR015797">
    <property type="entry name" value="NUDIX_hydrolase-like_dom_sf"/>
</dbReference>
<dbReference type="InterPro" id="IPR000086">
    <property type="entry name" value="NUDIX_hydrolase_dom"/>
</dbReference>
<dbReference type="InterPro" id="IPR000059">
    <property type="entry name" value="NUDIX_hydrolase_NudL_CS"/>
</dbReference>
<dbReference type="InterPro" id="IPR023735">
    <property type="entry name" value="Nudix_NudL"/>
</dbReference>
<dbReference type="NCBIfam" id="NF007980">
    <property type="entry name" value="PRK10707.1"/>
    <property type="match status" value="1"/>
</dbReference>
<dbReference type="PANTHER" id="PTHR12992:SF11">
    <property type="entry name" value="MITOCHONDRIAL COENZYME A DIPHOSPHATASE NUDT8"/>
    <property type="match status" value="1"/>
</dbReference>
<dbReference type="PANTHER" id="PTHR12992">
    <property type="entry name" value="NUDIX HYDROLASE"/>
    <property type="match status" value="1"/>
</dbReference>
<dbReference type="Pfam" id="PF00293">
    <property type="entry name" value="NUDIX"/>
    <property type="match status" value="1"/>
</dbReference>
<dbReference type="SUPFAM" id="SSF55811">
    <property type="entry name" value="Nudix"/>
    <property type="match status" value="1"/>
</dbReference>
<dbReference type="PROSITE" id="PS51462">
    <property type="entry name" value="NUDIX"/>
    <property type="match status" value="1"/>
</dbReference>
<dbReference type="PROSITE" id="PS01293">
    <property type="entry name" value="NUDIX_COA"/>
    <property type="match status" value="1"/>
</dbReference>
<keyword id="KW-0378">Hydrolase</keyword>
<keyword id="KW-0460">Magnesium</keyword>
<keyword id="KW-0464">Manganese</keyword>
<keyword id="KW-0479">Metal-binding</keyword>
<accession>Q0T506</accession>
<organism>
    <name type="scientific">Shigella flexneri serotype 5b (strain 8401)</name>
    <dbReference type="NCBI Taxonomy" id="373384"/>
    <lineage>
        <taxon>Bacteria</taxon>
        <taxon>Pseudomonadati</taxon>
        <taxon>Pseudomonadota</taxon>
        <taxon>Gammaproteobacteria</taxon>
        <taxon>Enterobacterales</taxon>
        <taxon>Enterobacteriaceae</taxon>
        <taxon>Shigella</taxon>
    </lineage>
</organism>
<protein>
    <recommendedName>
        <fullName evidence="1">Uncharacterized Nudix hydrolase NudL</fullName>
        <ecNumber evidence="1">3.6.1.-</ecNumber>
    </recommendedName>
</protein>
<sequence length="192" mass="21460">MEYRSLTLDDFLSRFQLLRPQINREPLNHRQAAVLIPIVRRPQPGLLLTQRSIHLRKHAGQVAFPGGAVDDTDASVIAAALREAEEEVAIPPSAVEVIGVLPPVDSVTGYQVTPVVGIIPPDLPYRASEDEVSAVFEMPLAQALHLGRYHPLDIYRRGDSHRVWLSWYEQYFVWGMTAGIIRELALQIGVKP</sequence>
<reference key="1">
    <citation type="journal article" date="2006" name="BMC Genomics">
        <title>Complete genome sequence of Shigella flexneri 5b and comparison with Shigella flexneri 2a.</title>
        <authorList>
            <person name="Nie H."/>
            <person name="Yang F."/>
            <person name="Zhang X."/>
            <person name="Yang J."/>
            <person name="Chen L."/>
            <person name="Wang J."/>
            <person name="Xiong Z."/>
            <person name="Peng J."/>
            <person name="Sun L."/>
            <person name="Dong J."/>
            <person name="Xue Y."/>
            <person name="Xu X."/>
            <person name="Chen S."/>
            <person name="Yao Z."/>
            <person name="Shen Y."/>
            <person name="Jin Q."/>
        </authorList>
    </citation>
    <scope>NUCLEOTIDE SEQUENCE [LARGE SCALE GENOMIC DNA]</scope>
    <source>
        <strain>8401</strain>
    </source>
</reference>
<gene>
    <name evidence="1" type="primary">nudL</name>
    <name type="ordered locus">SFV_1416</name>
</gene>